<name>DCTA_LEPCP</name>
<proteinExistence type="inferred from homology"/>
<sequence length="447" mass="47616">MHTPSGPLPFYRSLYFQVITAIVIGVLLGHYWPETGTAMKPLGDGFIKLIKMIIAPIIFCTVVVGIAGMEDMKRVGKTGGLALLYFEVVSTLALLLGLLIVNLVQPGVGMHVDPATLDTKGIAAYTAPGKMQTTTEFLLAVIPTTVVDAFAKGEMLQVLLFSVMFGFALHQFGGRGTLVFDFIEKTSHVLFAIVGFIMKVAPIGAFGAMAFTIGKYGLGSLIPLAKLMGTFYATCLVFIFGVLGLIAKAHGFSIWKFIKYIKEELLIVLGTSSSESVLPRMMAKLENLGVRKSTVGLVVPTGYSFNLDGTSIYLTMAAVFIAQATDTPMTLTQQLTLLAVLLLTSKGAAGVTGSGFIVLAATLSAVGGVPVAGLALILGIDRFMSEARALTNLIGNGVATVVVGKWTGDLDEKQMRYHLDRETEAEANEPEAVLDEIDQHMPVPAAR</sequence>
<reference key="1">
    <citation type="submission" date="2008-03" db="EMBL/GenBank/DDBJ databases">
        <title>Complete sequence of Leptothrix cholodnii SP-6.</title>
        <authorList>
            <consortium name="US DOE Joint Genome Institute"/>
            <person name="Copeland A."/>
            <person name="Lucas S."/>
            <person name="Lapidus A."/>
            <person name="Glavina del Rio T."/>
            <person name="Dalin E."/>
            <person name="Tice H."/>
            <person name="Bruce D."/>
            <person name="Goodwin L."/>
            <person name="Pitluck S."/>
            <person name="Chertkov O."/>
            <person name="Brettin T."/>
            <person name="Detter J.C."/>
            <person name="Han C."/>
            <person name="Kuske C.R."/>
            <person name="Schmutz J."/>
            <person name="Larimer F."/>
            <person name="Land M."/>
            <person name="Hauser L."/>
            <person name="Kyrpides N."/>
            <person name="Lykidis A."/>
            <person name="Emerson D."/>
            <person name="Richardson P."/>
        </authorList>
    </citation>
    <scope>NUCLEOTIDE SEQUENCE [LARGE SCALE GENOMIC DNA]</scope>
    <source>
        <strain>ATCC 51168 / LMG 8142 / SP-6</strain>
    </source>
</reference>
<protein>
    <recommendedName>
        <fullName evidence="1">C4-dicarboxylate transport protein</fullName>
    </recommendedName>
</protein>
<dbReference type="EMBL" id="CP001013">
    <property type="protein sequence ID" value="ACB36591.1"/>
    <property type="molecule type" value="Genomic_DNA"/>
</dbReference>
<dbReference type="RefSeq" id="WP_012349332.1">
    <property type="nucleotide sequence ID" value="NC_010524.1"/>
</dbReference>
<dbReference type="SMR" id="B1Y0B2"/>
<dbReference type="STRING" id="395495.Lcho_4340"/>
<dbReference type="KEGG" id="lch:Lcho_4340"/>
<dbReference type="eggNOG" id="COG1301">
    <property type="taxonomic scope" value="Bacteria"/>
</dbReference>
<dbReference type="HOGENOM" id="CLU_019375_7_0_4"/>
<dbReference type="OrthoDB" id="9766690at2"/>
<dbReference type="Proteomes" id="UP000001693">
    <property type="component" value="Chromosome"/>
</dbReference>
<dbReference type="GO" id="GO:0005886">
    <property type="term" value="C:plasma membrane"/>
    <property type="evidence" value="ECO:0007669"/>
    <property type="project" value="UniProtKB-SubCell"/>
</dbReference>
<dbReference type="GO" id="GO:0015138">
    <property type="term" value="F:fumarate transmembrane transporter activity"/>
    <property type="evidence" value="ECO:0007669"/>
    <property type="project" value="TreeGrafter"/>
</dbReference>
<dbReference type="GO" id="GO:0015366">
    <property type="term" value="F:malate:proton symporter activity"/>
    <property type="evidence" value="ECO:0007669"/>
    <property type="project" value="TreeGrafter"/>
</dbReference>
<dbReference type="GO" id="GO:0015141">
    <property type="term" value="F:succinate transmembrane transporter activity"/>
    <property type="evidence" value="ECO:0007669"/>
    <property type="project" value="TreeGrafter"/>
</dbReference>
<dbReference type="GO" id="GO:0070778">
    <property type="term" value="P:L-aspartate transmembrane transport"/>
    <property type="evidence" value="ECO:0007669"/>
    <property type="project" value="TreeGrafter"/>
</dbReference>
<dbReference type="FunFam" id="1.10.3860.10:FF:000001">
    <property type="entry name" value="C4-dicarboxylate transport protein"/>
    <property type="match status" value="1"/>
</dbReference>
<dbReference type="Gene3D" id="1.10.3860.10">
    <property type="entry name" value="Sodium:dicarboxylate symporter"/>
    <property type="match status" value="1"/>
</dbReference>
<dbReference type="HAMAP" id="MF_01300">
    <property type="entry name" value="C4_dicarb_transport"/>
    <property type="match status" value="1"/>
</dbReference>
<dbReference type="InterPro" id="IPR023954">
    <property type="entry name" value="C4_dicarb_transport"/>
</dbReference>
<dbReference type="InterPro" id="IPR001991">
    <property type="entry name" value="Na-dicarboxylate_symporter"/>
</dbReference>
<dbReference type="InterPro" id="IPR018107">
    <property type="entry name" value="Na-dicarboxylate_symporter_CS"/>
</dbReference>
<dbReference type="InterPro" id="IPR036458">
    <property type="entry name" value="Na:dicarbo_symporter_sf"/>
</dbReference>
<dbReference type="NCBIfam" id="NF002461">
    <property type="entry name" value="PRK01663.1"/>
    <property type="match status" value="1"/>
</dbReference>
<dbReference type="NCBIfam" id="NF009587">
    <property type="entry name" value="PRK13027.1"/>
    <property type="match status" value="1"/>
</dbReference>
<dbReference type="PANTHER" id="PTHR42865:SF1">
    <property type="entry name" value="AEROBIC C4-DICARBOXYLATE TRANSPORT PROTEIN"/>
    <property type="match status" value="1"/>
</dbReference>
<dbReference type="PANTHER" id="PTHR42865">
    <property type="entry name" value="PROTON/GLUTAMATE-ASPARTATE SYMPORTER"/>
    <property type="match status" value="1"/>
</dbReference>
<dbReference type="Pfam" id="PF00375">
    <property type="entry name" value="SDF"/>
    <property type="match status" value="1"/>
</dbReference>
<dbReference type="PRINTS" id="PR00173">
    <property type="entry name" value="EDTRNSPORT"/>
</dbReference>
<dbReference type="SUPFAM" id="SSF118215">
    <property type="entry name" value="Proton glutamate symport protein"/>
    <property type="match status" value="1"/>
</dbReference>
<dbReference type="PROSITE" id="PS00713">
    <property type="entry name" value="NA_DICARBOXYL_SYMP_1"/>
    <property type="match status" value="1"/>
</dbReference>
<dbReference type="PROSITE" id="PS00714">
    <property type="entry name" value="NA_DICARBOXYL_SYMP_2"/>
    <property type="match status" value="1"/>
</dbReference>
<accession>B1Y0B2</accession>
<gene>
    <name evidence="1" type="primary">dctA</name>
    <name type="ordered locus">Lcho_4340</name>
</gene>
<organism>
    <name type="scientific">Leptothrix cholodnii (strain ATCC 51168 / LMG 8142 / SP-6)</name>
    <name type="common">Leptothrix discophora (strain SP-6)</name>
    <dbReference type="NCBI Taxonomy" id="395495"/>
    <lineage>
        <taxon>Bacteria</taxon>
        <taxon>Pseudomonadati</taxon>
        <taxon>Pseudomonadota</taxon>
        <taxon>Betaproteobacteria</taxon>
        <taxon>Burkholderiales</taxon>
        <taxon>Sphaerotilaceae</taxon>
        <taxon>Leptothrix</taxon>
    </lineage>
</organism>
<comment type="function">
    <text evidence="1">Responsible for the transport of dicarboxylates such as succinate, fumarate, and malate from the periplasm across the membrane.</text>
</comment>
<comment type="subcellular location">
    <subcellularLocation>
        <location evidence="1">Cell inner membrane</location>
        <topology evidence="1">Multi-pass membrane protein</topology>
    </subcellularLocation>
</comment>
<comment type="similarity">
    <text evidence="1">Belongs to the dicarboxylate/amino acid:cation symporter (DAACS) (TC 2.A.23) family.</text>
</comment>
<evidence type="ECO:0000255" key="1">
    <source>
        <dbReference type="HAMAP-Rule" id="MF_01300"/>
    </source>
</evidence>
<evidence type="ECO:0000256" key="2">
    <source>
        <dbReference type="SAM" id="MobiDB-lite"/>
    </source>
</evidence>
<feature type="chain" id="PRO_1000140460" description="C4-dicarboxylate transport protein">
    <location>
        <begin position="1"/>
        <end position="447"/>
    </location>
</feature>
<feature type="transmembrane region" description="Helical" evidence="1">
    <location>
        <begin position="13"/>
        <end position="33"/>
    </location>
</feature>
<feature type="transmembrane region" description="Helical" evidence="1">
    <location>
        <begin position="49"/>
        <end position="69"/>
    </location>
</feature>
<feature type="transmembrane region" description="Helical" evidence="1">
    <location>
        <begin position="81"/>
        <end position="101"/>
    </location>
</feature>
<feature type="transmembrane region" description="Helical" evidence="1">
    <location>
        <begin position="149"/>
        <end position="169"/>
    </location>
</feature>
<feature type="transmembrane region" description="Helical" evidence="1">
    <location>
        <begin position="189"/>
        <end position="209"/>
    </location>
</feature>
<feature type="transmembrane region" description="Helical" evidence="1">
    <location>
        <begin position="227"/>
        <end position="247"/>
    </location>
</feature>
<feature type="transmembrane region" description="Helical" evidence="1">
    <location>
        <begin position="302"/>
        <end position="322"/>
    </location>
</feature>
<feature type="transmembrane region" description="Helical" evidence="1">
    <location>
        <begin position="336"/>
        <end position="356"/>
    </location>
</feature>
<feature type="transmembrane region" description="Helical" evidence="1">
    <location>
        <begin position="357"/>
        <end position="377"/>
    </location>
</feature>
<feature type="region of interest" description="Disordered" evidence="2">
    <location>
        <begin position="422"/>
        <end position="447"/>
    </location>
</feature>
<feature type="compositionally biased region" description="Acidic residues" evidence="2">
    <location>
        <begin position="425"/>
        <end position="436"/>
    </location>
</feature>
<keyword id="KW-0997">Cell inner membrane</keyword>
<keyword id="KW-1003">Cell membrane</keyword>
<keyword id="KW-0472">Membrane</keyword>
<keyword id="KW-1185">Reference proteome</keyword>
<keyword id="KW-0769">Symport</keyword>
<keyword id="KW-0812">Transmembrane</keyword>
<keyword id="KW-1133">Transmembrane helix</keyword>
<keyword id="KW-0813">Transport</keyword>